<feature type="chain" id="PRO_1000051574" description="Glucose-1-phosphate adenylyltransferase">
    <location>
        <begin position="1"/>
        <end position="404"/>
    </location>
</feature>
<feature type="binding site" evidence="1">
    <location>
        <position position="99"/>
    </location>
    <ligand>
        <name>alpha-D-glucose 1-phosphate</name>
        <dbReference type="ChEBI" id="CHEBI:58601"/>
    </ligand>
</feature>
<feature type="binding site" evidence="1">
    <location>
        <position position="164"/>
    </location>
    <ligand>
        <name>alpha-D-glucose 1-phosphate</name>
        <dbReference type="ChEBI" id="CHEBI:58601"/>
    </ligand>
</feature>
<feature type="binding site" evidence="1">
    <location>
        <begin position="179"/>
        <end position="180"/>
    </location>
    <ligand>
        <name>alpha-D-glucose 1-phosphate</name>
        <dbReference type="ChEBI" id="CHEBI:58601"/>
    </ligand>
</feature>
<feature type="binding site" evidence="1">
    <location>
        <position position="197"/>
    </location>
    <ligand>
        <name>alpha-D-glucose 1-phosphate</name>
        <dbReference type="ChEBI" id="CHEBI:58601"/>
    </ligand>
</feature>
<gene>
    <name evidence="1" type="primary">glgC</name>
    <name type="ordered locus">BCG_1273</name>
</gene>
<sequence length="404" mass="43800">MREVPHVLGIVLAGGEGKRLYPLTADRAKPAVPFGGAYRLIDFVLSNLVNARYLRICVLTQYKSHSLDRHISQNWRLSGLAGEYITPVPAQQRLGPRWYTGSADAIYQSLNLIYDEDPDYIVVFGADHVYRMDPEQMVRFHIDSGAGATVAGIRVPRENATAFGCIDADDSGRIRSFVEKPLEPPGTPDDPDTTFVSMGNYIFTTKVLIDAIRADADDDHSDHDMGGDIVPRLVADGMAAVYDFSDNEVPGATDRDRAYWRDVGTLDAFYDAHMDLVSVHPVFNLYNKRWPIRGESENLAPAKFVNGGSAQESVVGAGSIISAASVRNSVLSSNVVVDDGAIVEGSVIMPGTRVGRGAVVRHAILDKNVVVGPGEMVGVDLEKDRERFAISAGGVVAVGKGVWI</sequence>
<keyword id="KW-0067">ATP-binding</keyword>
<keyword id="KW-0119">Carbohydrate metabolism</keyword>
<keyword id="KW-0320">Glycogen biosynthesis</keyword>
<keyword id="KW-0321">Glycogen metabolism</keyword>
<keyword id="KW-0547">Nucleotide-binding</keyword>
<keyword id="KW-0548">Nucleotidyltransferase</keyword>
<keyword id="KW-0808">Transferase</keyword>
<dbReference type="EC" id="2.7.7.27" evidence="1"/>
<dbReference type="EMBL" id="AM408590">
    <property type="protein sequence ID" value="CAL71260.1"/>
    <property type="molecule type" value="Genomic_DNA"/>
</dbReference>
<dbReference type="RefSeq" id="WP_003406249.1">
    <property type="nucleotide sequence ID" value="NC_008769.1"/>
</dbReference>
<dbReference type="SMR" id="A1KI01"/>
<dbReference type="GeneID" id="45425183"/>
<dbReference type="KEGG" id="mbb:BCG_1273"/>
<dbReference type="HOGENOM" id="CLU_029499_14_1_11"/>
<dbReference type="UniPathway" id="UPA00164"/>
<dbReference type="UniPathway" id="UPA00934"/>
<dbReference type="Proteomes" id="UP000001472">
    <property type="component" value="Chromosome"/>
</dbReference>
<dbReference type="GO" id="GO:0005524">
    <property type="term" value="F:ATP binding"/>
    <property type="evidence" value="ECO:0007669"/>
    <property type="project" value="UniProtKB-KW"/>
</dbReference>
<dbReference type="GO" id="GO:0008878">
    <property type="term" value="F:glucose-1-phosphate adenylyltransferase activity"/>
    <property type="evidence" value="ECO:0007669"/>
    <property type="project" value="UniProtKB-UniRule"/>
</dbReference>
<dbReference type="GO" id="GO:0045227">
    <property type="term" value="P:capsule polysaccharide biosynthetic process"/>
    <property type="evidence" value="ECO:0007669"/>
    <property type="project" value="UniProtKB-UniPathway"/>
</dbReference>
<dbReference type="GO" id="GO:0005978">
    <property type="term" value="P:glycogen biosynthetic process"/>
    <property type="evidence" value="ECO:0007669"/>
    <property type="project" value="UniProtKB-UniRule"/>
</dbReference>
<dbReference type="CDD" id="cd02508">
    <property type="entry name" value="ADP_Glucose_PP"/>
    <property type="match status" value="1"/>
</dbReference>
<dbReference type="CDD" id="cd04651">
    <property type="entry name" value="LbH_G1P_AT_C"/>
    <property type="match status" value="1"/>
</dbReference>
<dbReference type="FunFam" id="2.160.10.10:FF:000020">
    <property type="entry name" value="Glucose-1-phosphate adenylyltransferase"/>
    <property type="match status" value="1"/>
</dbReference>
<dbReference type="FunFam" id="3.90.550.10:FF:000014">
    <property type="entry name" value="Glucose-1-phosphate adenylyltransferase"/>
    <property type="match status" value="1"/>
</dbReference>
<dbReference type="Gene3D" id="2.160.10.10">
    <property type="entry name" value="Hexapeptide repeat proteins"/>
    <property type="match status" value="1"/>
</dbReference>
<dbReference type="Gene3D" id="3.90.550.10">
    <property type="entry name" value="Spore Coat Polysaccharide Biosynthesis Protein SpsA, Chain A"/>
    <property type="match status" value="1"/>
</dbReference>
<dbReference type="HAMAP" id="MF_00624">
    <property type="entry name" value="GlgC"/>
    <property type="match status" value="1"/>
</dbReference>
<dbReference type="InterPro" id="IPR011831">
    <property type="entry name" value="ADP-Glc_PPase"/>
</dbReference>
<dbReference type="InterPro" id="IPR005836">
    <property type="entry name" value="ADP_Glu_pyroP_CS"/>
</dbReference>
<dbReference type="InterPro" id="IPR023049">
    <property type="entry name" value="GlgC_bac"/>
</dbReference>
<dbReference type="InterPro" id="IPR056818">
    <property type="entry name" value="GlmU/GlgC-like_hexapep"/>
</dbReference>
<dbReference type="InterPro" id="IPR005835">
    <property type="entry name" value="NTP_transferase_dom"/>
</dbReference>
<dbReference type="InterPro" id="IPR029044">
    <property type="entry name" value="Nucleotide-diphossugar_trans"/>
</dbReference>
<dbReference type="InterPro" id="IPR011004">
    <property type="entry name" value="Trimer_LpxA-like_sf"/>
</dbReference>
<dbReference type="NCBIfam" id="TIGR02091">
    <property type="entry name" value="glgC"/>
    <property type="match status" value="1"/>
</dbReference>
<dbReference type="NCBIfam" id="NF001947">
    <property type="entry name" value="PRK00725.1"/>
    <property type="match status" value="1"/>
</dbReference>
<dbReference type="NCBIfam" id="NF002023">
    <property type="entry name" value="PRK00844.1"/>
    <property type="match status" value="1"/>
</dbReference>
<dbReference type="PANTHER" id="PTHR43523:SF2">
    <property type="entry name" value="GLUCOSE-1-PHOSPHATE ADENYLYLTRANSFERASE"/>
    <property type="match status" value="1"/>
</dbReference>
<dbReference type="PANTHER" id="PTHR43523">
    <property type="entry name" value="GLUCOSE-1-PHOSPHATE ADENYLYLTRANSFERASE-RELATED"/>
    <property type="match status" value="1"/>
</dbReference>
<dbReference type="Pfam" id="PF24894">
    <property type="entry name" value="Hexapep_GlmU"/>
    <property type="match status" value="1"/>
</dbReference>
<dbReference type="Pfam" id="PF00483">
    <property type="entry name" value="NTP_transferase"/>
    <property type="match status" value="1"/>
</dbReference>
<dbReference type="SUPFAM" id="SSF53448">
    <property type="entry name" value="Nucleotide-diphospho-sugar transferases"/>
    <property type="match status" value="1"/>
</dbReference>
<dbReference type="SUPFAM" id="SSF51161">
    <property type="entry name" value="Trimeric LpxA-like enzymes"/>
    <property type="match status" value="1"/>
</dbReference>
<dbReference type="PROSITE" id="PS00808">
    <property type="entry name" value="ADP_GLC_PYROPHOSPH_1"/>
    <property type="match status" value="1"/>
</dbReference>
<dbReference type="PROSITE" id="PS00809">
    <property type="entry name" value="ADP_GLC_PYROPHOSPH_2"/>
    <property type="match status" value="1"/>
</dbReference>
<dbReference type="PROSITE" id="PS00810">
    <property type="entry name" value="ADP_GLC_PYROPHOSPH_3"/>
    <property type="match status" value="1"/>
</dbReference>
<organism>
    <name type="scientific">Mycobacterium bovis (strain BCG / Pasteur 1173P2)</name>
    <dbReference type="NCBI Taxonomy" id="410289"/>
    <lineage>
        <taxon>Bacteria</taxon>
        <taxon>Bacillati</taxon>
        <taxon>Actinomycetota</taxon>
        <taxon>Actinomycetes</taxon>
        <taxon>Mycobacteriales</taxon>
        <taxon>Mycobacteriaceae</taxon>
        <taxon>Mycobacterium</taxon>
        <taxon>Mycobacterium tuberculosis complex</taxon>
    </lineage>
</organism>
<proteinExistence type="inferred from homology"/>
<comment type="function">
    <text evidence="1">Involved in the biosynthesis of ADP-glucose, a building block, required in the biosynthesis of maltose-1-phosphate (M1P) and in the elongation reactions to produce linear alpha-1,4-glucans. Catalyzes the reaction between ATP and alpha-D-glucose 1-phosphate (G1P) to produce pyrophosphate and ADP-Glc.</text>
</comment>
<comment type="catalytic activity">
    <reaction evidence="1">
        <text>alpha-D-glucose 1-phosphate + ATP + H(+) = ADP-alpha-D-glucose + diphosphate</text>
        <dbReference type="Rhea" id="RHEA:12120"/>
        <dbReference type="ChEBI" id="CHEBI:15378"/>
        <dbReference type="ChEBI" id="CHEBI:30616"/>
        <dbReference type="ChEBI" id="CHEBI:33019"/>
        <dbReference type="ChEBI" id="CHEBI:57498"/>
        <dbReference type="ChEBI" id="CHEBI:58601"/>
        <dbReference type="EC" id="2.7.7.27"/>
    </reaction>
</comment>
<comment type="pathway">
    <text evidence="2">Capsule biogenesis; capsule polysaccharide biosynthesis.</text>
</comment>
<comment type="pathway">
    <text evidence="1">Glycan biosynthesis; glycogen biosynthesis.</text>
</comment>
<comment type="similarity">
    <text evidence="1">Belongs to the bacterial/plant glucose-1-phosphate adenylyltransferase family.</text>
</comment>
<evidence type="ECO:0000255" key="1">
    <source>
        <dbReference type="HAMAP-Rule" id="MF_00624"/>
    </source>
</evidence>
<evidence type="ECO:0000305" key="2"/>
<accession>A1KI01</accession>
<reference key="1">
    <citation type="journal article" date="2007" name="Proc. Natl. Acad. Sci. U.S.A.">
        <title>Genome plasticity of BCG and impact on vaccine efficacy.</title>
        <authorList>
            <person name="Brosch R."/>
            <person name="Gordon S.V."/>
            <person name="Garnier T."/>
            <person name="Eiglmeier K."/>
            <person name="Frigui W."/>
            <person name="Valenti P."/>
            <person name="Dos Santos S."/>
            <person name="Duthoy S."/>
            <person name="Lacroix C."/>
            <person name="Garcia-Pelayo C."/>
            <person name="Inwald J.K."/>
            <person name="Golby P."/>
            <person name="Garcia J.N."/>
            <person name="Hewinson R.G."/>
            <person name="Behr M.A."/>
            <person name="Quail M.A."/>
            <person name="Churcher C."/>
            <person name="Barrell B.G."/>
            <person name="Parkhill J."/>
            <person name="Cole S.T."/>
        </authorList>
    </citation>
    <scope>NUCLEOTIDE SEQUENCE [LARGE SCALE GENOMIC DNA]</scope>
    <source>
        <strain>BCG / Pasteur 1173P2</strain>
    </source>
</reference>
<protein>
    <recommendedName>
        <fullName evidence="1">Glucose-1-phosphate adenylyltransferase</fullName>
        <ecNumber evidence="1">2.7.7.27</ecNumber>
    </recommendedName>
    <alternativeName>
        <fullName evidence="1">ADP-glucose pyrophosphorylase</fullName>
        <shortName evidence="1">ADPGlc PPase</shortName>
    </alternativeName>
    <alternativeName>
        <fullName evidence="1">ADP-glucose synthase</fullName>
    </alternativeName>
</protein>
<name>GLGC_MYCBP</name>